<dbReference type="EC" id="3.5.4.13" evidence="1"/>
<dbReference type="EMBL" id="CP001182">
    <property type="protein sequence ID" value="ACJ40633.1"/>
    <property type="molecule type" value="Genomic_DNA"/>
</dbReference>
<dbReference type="RefSeq" id="WP_000985728.1">
    <property type="nucleotide sequence ID" value="NC_011586.2"/>
</dbReference>
<dbReference type="SMR" id="B7I774"/>
<dbReference type="GeneID" id="92892716"/>
<dbReference type="KEGG" id="abn:AB57_0835"/>
<dbReference type="HOGENOM" id="CLU_087476_4_0_6"/>
<dbReference type="UniPathway" id="UPA00610">
    <property type="reaction ID" value="UER00665"/>
</dbReference>
<dbReference type="Proteomes" id="UP000007094">
    <property type="component" value="Chromosome"/>
</dbReference>
<dbReference type="GO" id="GO:0008829">
    <property type="term" value="F:dCTP deaminase activity"/>
    <property type="evidence" value="ECO:0007669"/>
    <property type="project" value="UniProtKB-UniRule"/>
</dbReference>
<dbReference type="GO" id="GO:0000166">
    <property type="term" value="F:nucleotide binding"/>
    <property type="evidence" value="ECO:0007669"/>
    <property type="project" value="UniProtKB-KW"/>
</dbReference>
<dbReference type="GO" id="GO:0006226">
    <property type="term" value="P:dUMP biosynthetic process"/>
    <property type="evidence" value="ECO:0007669"/>
    <property type="project" value="UniProtKB-UniPathway"/>
</dbReference>
<dbReference type="GO" id="GO:0006229">
    <property type="term" value="P:dUTP biosynthetic process"/>
    <property type="evidence" value="ECO:0007669"/>
    <property type="project" value="UniProtKB-UniRule"/>
</dbReference>
<dbReference type="GO" id="GO:0015949">
    <property type="term" value="P:nucleobase-containing small molecule interconversion"/>
    <property type="evidence" value="ECO:0007669"/>
    <property type="project" value="TreeGrafter"/>
</dbReference>
<dbReference type="CDD" id="cd07557">
    <property type="entry name" value="trimeric_dUTPase"/>
    <property type="match status" value="1"/>
</dbReference>
<dbReference type="FunFam" id="2.70.40.10:FF:000001">
    <property type="entry name" value="dCTP deaminase"/>
    <property type="match status" value="1"/>
</dbReference>
<dbReference type="Gene3D" id="2.70.40.10">
    <property type="match status" value="1"/>
</dbReference>
<dbReference type="HAMAP" id="MF_00146">
    <property type="entry name" value="dCTP_deaminase"/>
    <property type="match status" value="1"/>
</dbReference>
<dbReference type="InterPro" id="IPR011962">
    <property type="entry name" value="dCTP_deaminase"/>
</dbReference>
<dbReference type="InterPro" id="IPR036157">
    <property type="entry name" value="dUTPase-like_sf"/>
</dbReference>
<dbReference type="InterPro" id="IPR033704">
    <property type="entry name" value="dUTPase_trimeric"/>
</dbReference>
<dbReference type="NCBIfam" id="TIGR02274">
    <property type="entry name" value="dCTP_deam"/>
    <property type="match status" value="1"/>
</dbReference>
<dbReference type="PANTHER" id="PTHR42680">
    <property type="entry name" value="DCTP DEAMINASE"/>
    <property type="match status" value="1"/>
</dbReference>
<dbReference type="PANTHER" id="PTHR42680:SF3">
    <property type="entry name" value="DCTP DEAMINASE"/>
    <property type="match status" value="1"/>
</dbReference>
<dbReference type="Pfam" id="PF22769">
    <property type="entry name" value="DCD"/>
    <property type="match status" value="1"/>
</dbReference>
<dbReference type="SUPFAM" id="SSF51283">
    <property type="entry name" value="dUTPase-like"/>
    <property type="match status" value="1"/>
</dbReference>
<sequence>MAIKSDRWIREMSEKHGMIEPYAENQVRFDKNGEKLISYGVSSYGYDVRCAREFKVFTNVHSAIVDPKNFDEKSFIDIESDVCIIPPNSFALARTIEYFRIPRNVLTVCLGKSTYARCGIIVNVTPLEPEWEGHVTLEFSNTTNLPARIYAGEGVAQMLFFESDEVCETSYKDRGGKYQGQTGVTLPKT</sequence>
<name>DCD_ACIB5</name>
<comment type="function">
    <text evidence="1">Catalyzes the deamination of dCTP to dUTP.</text>
</comment>
<comment type="catalytic activity">
    <reaction evidence="1">
        <text>dCTP + H2O + H(+) = dUTP + NH4(+)</text>
        <dbReference type="Rhea" id="RHEA:22680"/>
        <dbReference type="ChEBI" id="CHEBI:15377"/>
        <dbReference type="ChEBI" id="CHEBI:15378"/>
        <dbReference type="ChEBI" id="CHEBI:28938"/>
        <dbReference type="ChEBI" id="CHEBI:61481"/>
        <dbReference type="ChEBI" id="CHEBI:61555"/>
        <dbReference type="EC" id="3.5.4.13"/>
    </reaction>
</comment>
<comment type="pathway">
    <text evidence="1">Pyrimidine metabolism; dUMP biosynthesis; dUMP from dCTP (dUTP route): step 1/2.</text>
</comment>
<comment type="subunit">
    <text evidence="1">Homotrimer.</text>
</comment>
<comment type="similarity">
    <text evidence="1">Belongs to the dCTP deaminase family.</text>
</comment>
<keyword id="KW-0378">Hydrolase</keyword>
<keyword id="KW-0546">Nucleotide metabolism</keyword>
<keyword id="KW-0547">Nucleotide-binding</keyword>
<feature type="chain" id="PRO_1000189821" description="dCTP deaminase">
    <location>
        <begin position="1"/>
        <end position="189"/>
    </location>
</feature>
<feature type="active site" description="Proton donor/acceptor" evidence="1">
    <location>
        <position position="138"/>
    </location>
</feature>
<feature type="binding site" evidence="1">
    <location>
        <begin position="112"/>
        <end position="117"/>
    </location>
    <ligand>
        <name>dCTP</name>
        <dbReference type="ChEBI" id="CHEBI:61481"/>
    </ligand>
</feature>
<feature type="binding site" evidence="1">
    <location>
        <begin position="136"/>
        <end position="138"/>
    </location>
    <ligand>
        <name>dCTP</name>
        <dbReference type="ChEBI" id="CHEBI:61481"/>
    </ligand>
</feature>
<feature type="binding site" evidence="1">
    <location>
        <position position="157"/>
    </location>
    <ligand>
        <name>dCTP</name>
        <dbReference type="ChEBI" id="CHEBI:61481"/>
    </ligand>
</feature>
<feature type="binding site" evidence="1">
    <location>
        <position position="171"/>
    </location>
    <ligand>
        <name>dCTP</name>
        <dbReference type="ChEBI" id="CHEBI:61481"/>
    </ligand>
</feature>
<feature type="binding site" evidence="1">
    <location>
        <position position="181"/>
    </location>
    <ligand>
        <name>dCTP</name>
        <dbReference type="ChEBI" id="CHEBI:61481"/>
    </ligand>
</feature>
<organism>
    <name type="scientific">Acinetobacter baumannii (strain AB0057)</name>
    <dbReference type="NCBI Taxonomy" id="480119"/>
    <lineage>
        <taxon>Bacteria</taxon>
        <taxon>Pseudomonadati</taxon>
        <taxon>Pseudomonadota</taxon>
        <taxon>Gammaproteobacteria</taxon>
        <taxon>Moraxellales</taxon>
        <taxon>Moraxellaceae</taxon>
        <taxon>Acinetobacter</taxon>
        <taxon>Acinetobacter calcoaceticus/baumannii complex</taxon>
    </lineage>
</organism>
<proteinExistence type="inferred from homology"/>
<reference key="1">
    <citation type="journal article" date="2008" name="J. Bacteriol.">
        <title>Comparative genome sequence analysis of multidrug-resistant Acinetobacter baumannii.</title>
        <authorList>
            <person name="Adams M.D."/>
            <person name="Goglin K."/>
            <person name="Molyneaux N."/>
            <person name="Hujer K.M."/>
            <person name="Lavender H."/>
            <person name="Jamison J.J."/>
            <person name="MacDonald I.J."/>
            <person name="Martin K.M."/>
            <person name="Russo T."/>
            <person name="Campagnari A.A."/>
            <person name="Hujer A.M."/>
            <person name="Bonomo R.A."/>
            <person name="Gill S.R."/>
        </authorList>
    </citation>
    <scope>NUCLEOTIDE SEQUENCE [LARGE SCALE GENOMIC DNA]</scope>
    <source>
        <strain>AB0057</strain>
    </source>
</reference>
<accession>B7I774</accession>
<protein>
    <recommendedName>
        <fullName evidence="1">dCTP deaminase</fullName>
        <ecNumber evidence="1">3.5.4.13</ecNumber>
    </recommendedName>
    <alternativeName>
        <fullName evidence="1">Deoxycytidine triphosphate deaminase</fullName>
    </alternativeName>
</protein>
<gene>
    <name evidence="1" type="primary">dcd</name>
    <name type="ordered locus">AB57_0835</name>
</gene>
<evidence type="ECO:0000255" key="1">
    <source>
        <dbReference type="HAMAP-Rule" id="MF_00146"/>
    </source>
</evidence>